<name>TRPA_LEGPC</name>
<reference key="1">
    <citation type="submission" date="2006-11" db="EMBL/GenBank/DDBJ databases">
        <title>Identification and characterization of a new conjugation/ type IVA secretion system (trb/tra) of L. pneumophila Corby localized on a mobile genomic island.</title>
        <authorList>
            <person name="Gloeckner G."/>
            <person name="Albert-Weissenberger C."/>
            <person name="Weinmann E."/>
            <person name="Jacobi S."/>
            <person name="Schunder E."/>
            <person name="Steinert M."/>
            <person name="Buchrieser C."/>
            <person name="Hacker J."/>
            <person name="Heuner K."/>
        </authorList>
    </citation>
    <scope>NUCLEOTIDE SEQUENCE [LARGE SCALE GENOMIC DNA]</scope>
    <source>
        <strain>Corby</strain>
    </source>
</reference>
<accession>A5IBF8</accession>
<feature type="chain" id="PRO_1000018222" description="Tryptophan synthase alpha chain">
    <location>
        <begin position="1"/>
        <end position="272"/>
    </location>
</feature>
<feature type="active site" description="Proton acceptor" evidence="1">
    <location>
        <position position="49"/>
    </location>
</feature>
<feature type="active site" description="Proton acceptor" evidence="1">
    <location>
        <position position="60"/>
    </location>
</feature>
<protein>
    <recommendedName>
        <fullName evidence="1">Tryptophan synthase alpha chain</fullName>
        <ecNumber evidence="1">4.2.1.20</ecNumber>
    </recommendedName>
</protein>
<sequence length="272" mass="29964">MNRIDKTLEKLKANRKKMLSPYITAGDPYPELTVSLMHQLVKSGADVLELGIPFSDPMAEGPVIQRAMERALAHSIHCDDVLNMVRQFRKTDNETPVILMGYLNPIEQYGYDLFAQQAVEAGVDGTILVDLPPEEADGVSRVWQKHGLYSIYLCSPTTSAERMNFINQHANGYLYYVSLKGVTGSDALKLPELKAQYLQRKAQSKLPLMVGFGIKTPEMAAQVAEFADGVIVGATLINEIIEAYEAKKDPLQASGALLSSMRQAIDNIGSMV</sequence>
<comment type="function">
    <text evidence="1">The alpha subunit is responsible for the aldol cleavage of indoleglycerol phosphate to indole and glyceraldehyde 3-phosphate.</text>
</comment>
<comment type="catalytic activity">
    <reaction evidence="1">
        <text>(1S,2R)-1-C-(indol-3-yl)glycerol 3-phosphate + L-serine = D-glyceraldehyde 3-phosphate + L-tryptophan + H2O</text>
        <dbReference type="Rhea" id="RHEA:10532"/>
        <dbReference type="ChEBI" id="CHEBI:15377"/>
        <dbReference type="ChEBI" id="CHEBI:33384"/>
        <dbReference type="ChEBI" id="CHEBI:57912"/>
        <dbReference type="ChEBI" id="CHEBI:58866"/>
        <dbReference type="ChEBI" id="CHEBI:59776"/>
        <dbReference type="EC" id="4.2.1.20"/>
    </reaction>
</comment>
<comment type="pathway">
    <text evidence="1">Amino-acid biosynthesis; L-tryptophan biosynthesis; L-tryptophan from chorismate: step 5/5.</text>
</comment>
<comment type="subunit">
    <text evidence="1">Tetramer of two alpha and two beta chains.</text>
</comment>
<comment type="similarity">
    <text evidence="1">Belongs to the TrpA family.</text>
</comment>
<dbReference type="EC" id="4.2.1.20" evidence="1"/>
<dbReference type="EMBL" id="CP000675">
    <property type="protein sequence ID" value="ABQ54708.1"/>
    <property type="molecule type" value="Genomic_DNA"/>
</dbReference>
<dbReference type="RefSeq" id="WP_011946352.1">
    <property type="nucleotide sequence ID" value="NC_009494.2"/>
</dbReference>
<dbReference type="SMR" id="A5IBF8"/>
<dbReference type="KEGG" id="lpc:LPC_0730"/>
<dbReference type="HOGENOM" id="CLU_016734_0_0_6"/>
<dbReference type="UniPathway" id="UPA00035">
    <property type="reaction ID" value="UER00044"/>
</dbReference>
<dbReference type="GO" id="GO:0005829">
    <property type="term" value="C:cytosol"/>
    <property type="evidence" value="ECO:0007669"/>
    <property type="project" value="TreeGrafter"/>
</dbReference>
<dbReference type="GO" id="GO:0004834">
    <property type="term" value="F:tryptophan synthase activity"/>
    <property type="evidence" value="ECO:0007669"/>
    <property type="project" value="UniProtKB-UniRule"/>
</dbReference>
<dbReference type="CDD" id="cd04724">
    <property type="entry name" value="Tryptophan_synthase_alpha"/>
    <property type="match status" value="1"/>
</dbReference>
<dbReference type="FunFam" id="3.20.20.70:FF:000037">
    <property type="entry name" value="Tryptophan synthase alpha chain"/>
    <property type="match status" value="1"/>
</dbReference>
<dbReference type="Gene3D" id="3.20.20.70">
    <property type="entry name" value="Aldolase class I"/>
    <property type="match status" value="1"/>
</dbReference>
<dbReference type="HAMAP" id="MF_00131">
    <property type="entry name" value="Trp_synth_alpha"/>
    <property type="match status" value="1"/>
</dbReference>
<dbReference type="InterPro" id="IPR013785">
    <property type="entry name" value="Aldolase_TIM"/>
</dbReference>
<dbReference type="InterPro" id="IPR011060">
    <property type="entry name" value="RibuloseP-bd_barrel"/>
</dbReference>
<dbReference type="InterPro" id="IPR018204">
    <property type="entry name" value="Trp_synthase_alpha_AS"/>
</dbReference>
<dbReference type="InterPro" id="IPR002028">
    <property type="entry name" value="Trp_synthase_suA"/>
</dbReference>
<dbReference type="NCBIfam" id="TIGR00262">
    <property type="entry name" value="trpA"/>
    <property type="match status" value="1"/>
</dbReference>
<dbReference type="PANTHER" id="PTHR43406:SF1">
    <property type="entry name" value="TRYPTOPHAN SYNTHASE ALPHA CHAIN, CHLOROPLASTIC"/>
    <property type="match status" value="1"/>
</dbReference>
<dbReference type="PANTHER" id="PTHR43406">
    <property type="entry name" value="TRYPTOPHAN SYNTHASE, ALPHA CHAIN"/>
    <property type="match status" value="1"/>
</dbReference>
<dbReference type="Pfam" id="PF00290">
    <property type="entry name" value="Trp_syntA"/>
    <property type="match status" value="1"/>
</dbReference>
<dbReference type="SUPFAM" id="SSF51366">
    <property type="entry name" value="Ribulose-phoshate binding barrel"/>
    <property type="match status" value="1"/>
</dbReference>
<dbReference type="PROSITE" id="PS00167">
    <property type="entry name" value="TRP_SYNTHASE_ALPHA"/>
    <property type="match status" value="1"/>
</dbReference>
<gene>
    <name evidence="1" type="primary">trpA</name>
    <name type="ordered locus">LPC_0730</name>
</gene>
<keyword id="KW-0028">Amino-acid biosynthesis</keyword>
<keyword id="KW-0057">Aromatic amino acid biosynthesis</keyword>
<keyword id="KW-0456">Lyase</keyword>
<keyword id="KW-0822">Tryptophan biosynthesis</keyword>
<evidence type="ECO:0000255" key="1">
    <source>
        <dbReference type="HAMAP-Rule" id="MF_00131"/>
    </source>
</evidence>
<organism>
    <name type="scientific">Legionella pneumophila (strain Corby)</name>
    <dbReference type="NCBI Taxonomy" id="400673"/>
    <lineage>
        <taxon>Bacteria</taxon>
        <taxon>Pseudomonadati</taxon>
        <taxon>Pseudomonadota</taxon>
        <taxon>Gammaproteobacteria</taxon>
        <taxon>Legionellales</taxon>
        <taxon>Legionellaceae</taxon>
        <taxon>Legionella</taxon>
    </lineage>
</organism>
<proteinExistence type="inferred from homology"/>